<sequence length="265" mass="28951">MLKGFAWIISVGNELLIGRVVNTNAAWLAAKLTYLGYAVRRIVVVPDEENEIVEAFRDAMERSDVVISTGGLGPTPDDITNLAFCKALGVEAEVNEEALRMVREKYESRGYPMTPEREKMAKMPPGAVPLPNPVGTAPGILYQRGDKVVVLLPGVPREMEAIFENSVEPLLKSRGPPVYFSEKVVVVRGVPEADIAPILKEVMKIDPRLYVKSHPKGFEVGAPLLHIHIYASAGSEEEAQGLVKKVAERLVELLKSRPGAEVSTS</sequence>
<comment type="similarity">
    <text evidence="1">Belongs to the CinA family.</text>
</comment>
<evidence type="ECO:0000255" key="1">
    <source>
        <dbReference type="HAMAP-Rule" id="MF_00226"/>
    </source>
</evidence>
<feature type="chain" id="PRO_0000336540" description="Protein Pars_0096">
    <location>
        <begin position="1"/>
        <end position="265"/>
    </location>
</feature>
<dbReference type="EMBL" id="CP000660">
    <property type="protein sequence ID" value="ABP49711.1"/>
    <property type="molecule type" value="Genomic_DNA"/>
</dbReference>
<dbReference type="SMR" id="A4WH44"/>
<dbReference type="STRING" id="340102.Pars_0096"/>
<dbReference type="KEGG" id="pas:Pars_0096"/>
<dbReference type="HOGENOM" id="CLU_030805_0_5_2"/>
<dbReference type="OrthoDB" id="372037at2157"/>
<dbReference type="PhylomeDB" id="A4WH44"/>
<dbReference type="Proteomes" id="UP000001567">
    <property type="component" value="Chromosome"/>
</dbReference>
<dbReference type="CDD" id="cd00885">
    <property type="entry name" value="cinA"/>
    <property type="match status" value="1"/>
</dbReference>
<dbReference type="Gene3D" id="3.40.980.10">
    <property type="entry name" value="MoaB/Mog-like domain"/>
    <property type="match status" value="1"/>
</dbReference>
<dbReference type="HAMAP" id="MF_00226_A">
    <property type="entry name" value="CinA_A"/>
    <property type="match status" value="1"/>
</dbReference>
<dbReference type="InterPro" id="IPR050101">
    <property type="entry name" value="CinA"/>
</dbReference>
<dbReference type="InterPro" id="IPR023055">
    <property type="entry name" value="CinA_Arc"/>
</dbReference>
<dbReference type="InterPro" id="IPR036425">
    <property type="entry name" value="MoaB/Mog-like_dom_sf"/>
</dbReference>
<dbReference type="InterPro" id="IPR001453">
    <property type="entry name" value="MoaB/Mog_dom"/>
</dbReference>
<dbReference type="NCBIfam" id="TIGR00177">
    <property type="entry name" value="molyb_syn"/>
    <property type="match status" value="1"/>
</dbReference>
<dbReference type="NCBIfam" id="NF002291">
    <property type="entry name" value="PRK01215.1"/>
    <property type="match status" value="1"/>
</dbReference>
<dbReference type="PANTHER" id="PTHR13939">
    <property type="entry name" value="NICOTINAMIDE-NUCLEOTIDE AMIDOHYDROLASE PNCC"/>
    <property type="match status" value="1"/>
</dbReference>
<dbReference type="PANTHER" id="PTHR13939:SF0">
    <property type="entry name" value="NMN AMIDOHYDROLASE-LIKE PROTEIN YFAY"/>
    <property type="match status" value="1"/>
</dbReference>
<dbReference type="Pfam" id="PF00994">
    <property type="entry name" value="MoCF_biosynth"/>
    <property type="match status" value="1"/>
</dbReference>
<dbReference type="SMART" id="SM00852">
    <property type="entry name" value="MoCF_biosynth"/>
    <property type="match status" value="1"/>
</dbReference>
<dbReference type="SUPFAM" id="SSF53218">
    <property type="entry name" value="Molybdenum cofactor biosynthesis proteins"/>
    <property type="match status" value="1"/>
</dbReference>
<reference key="1">
    <citation type="submission" date="2007-04" db="EMBL/GenBank/DDBJ databases">
        <title>Complete sequence of Pyrobaculum arsenaticum DSM 13514.</title>
        <authorList>
            <consortium name="US DOE Joint Genome Institute"/>
            <person name="Copeland A."/>
            <person name="Lucas S."/>
            <person name="Lapidus A."/>
            <person name="Barry K."/>
            <person name="Glavina del Rio T."/>
            <person name="Dalin E."/>
            <person name="Tice H."/>
            <person name="Pitluck S."/>
            <person name="Chain P."/>
            <person name="Malfatti S."/>
            <person name="Shin M."/>
            <person name="Vergez L."/>
            <person name="Schmutz J."/>
            <person name="Larimer F."/>
            <person name="Land M."/>
            <person name="Hauser L."/>
            <person name="Kyrpides N."/>
            <person name="Mikhailova N."/>
            <person name="Cozen A.E."/>
            <person name="Fitz-Gibbon S.T."/>
            <person name="House C.H."/>
            <person name="Saltikov C."/>
            <person name="Lowe T.M."/>
            <person name="Richardson P."/>
        </authorList>
    </citation>
    <scope>NUCLEOTIDE SEQUENCE [LARGE SCALE GENOMIC DNA]</scope>
    <source>
        <strain>ATCC 700994 / DSM 13514 / JCM 11321 / PZ6</strain>
    </source>
</reference>
<name>Y096_PYRAR</name>
<accession>A4WH44</accession>
<organism>
    <name type="scientific">Pyrobaculum arsenaticum (strain DSM 13514 / JCM 11321 / PZ6)</name>
    <dbReference type="NCBI Taxonomy" id="340102"/>
    <lineage>
        <taxon>Archaea</taxon>
        <taxon>Thermoproteota</taxon>
        <taxon>Thermoprotei</taxon>
        <taxon>Thermoproteales</taxon>
        <taxon>Thermoproteaceae</taxon>
        <taxon>Pyrobaculum</taxon>
    </lineage>
</organism>
<protein>
    <recommendedName>
        <fullName evidence="1">Protein Pars_0096</fullName>
    </recommendedName>
</protein>
<gene>
    <name type="ordered locus">Pars_0096</name>
</gene>
<proteinExistence type="inferred from homology"/>